<proteinExistence type="inferred from homology"/>
<protein>
    <recommendedName>
        <fullName evidence="1">Phosphoribosylformylglycinamidine cyclo-ligase</fullName>
        <ecNumber evidence="1">6.3.3.1</ecNumber>
    </recommendedName>
    <alternativeName>
        <fullName evidence="1">AIR synthase</fullName>
    </alternativeName>
    <alternativeName>
        <fullName evidence="1">AIRS</fullName>
    </alternativeName>
    <alternativeName>
        <fullName evidence="1">Phosphoribosyl-aminoimidazole synthetase</fullName>
    </alternativeName>
</protein>
<sequence length="340" mass="36516">MSEKNAYAKSGVDVEAGYEVVERIKKHVARTERAGVMGVLGGFGGMFDLSKTGVKEPVLVSGTDGVGTKLMLAIKYDKHDTIGQDCVAMCVNDIIAAGAEPLYFLDYVATGKNNPVKLEEVVSGVAEGCVQAGAALIGGETAEMPGMYGEDDYDLAGFAVGVAEKSQIIDGSKVKEGDILLGLASSGIHSNGYSLVRRVFADYTGKELLPELEGKQLKDVLLEPTRIYVKAALPLIKEELVNGIGHITGGGFIENIPRMFADDLAAEIDEDKVPVLPIFKALEKYGDIKHEEMFEIFNMGVGLMLAVSPENVNRVKELLDEPVYEIGRIIKKADDSVVIK</sequence>
<organism>
    <name type="scientific">Streptococcus pyogenes serotype M4 (strain MGAS10750)</name>
    <dbReference type="NCBI Taxonomy" id="370554"/>
    <lineage>
        <taxon>Bacteria</taxon>
        <taxon>Bacillati</taxon>
        <taxon>Bacillota</taxon>
        <taxon>Bacilli</taxon>
        <taxon>Lactobacillales</taxon>
        <taxon>Streptococcaceae</taxon>
        <taxon>Streptococcus</taxon>
    </lineage>
</organism>
<name>PUR5_STRPF</name>
<dbReference type="EC" id="6.3.3.1" evidence="1"/>
<dbReference type="EMBL" id="CP000262">
    <property type="protein sequence ID" value="ABF36975.1"/>
    <property type="molecule type" value="Genomic_DNA"/>
</dbReference>
<dbReference type="SMR" id="Q1J936"/>
<dbReference type="KEGG" id="spi:MGAS10750_Spy0025"/>
<dbReference type="HOGENOM" id="CLU_047116_0_0_9"/>
<dbReference type="UniPathway" id="UPA00074">
    <property type="reaction ID" value="UER00129"/>
</dbReference>
<dbReference type="Proteomes" id="UP000002434">
    <property type="component" value="Chromosome"/>
</dbReference>
<dbReference type="GO" id="GO:0005829">
    <property type="term" value="C:cytosol"/>
    <property type="evidence" value="ECO:0007669"/>
    <property type="project" value="TreeGrafter"/>
</dbReference>
<dbReference type="GO" id="GO:0005524">
    <property type="term" value="F:ATP binding"/>
    <property type="evidence" value="ECO:0007669"/>
    <property type="project" value="UniProtKB-KW"/>
</dbReference>
<dbReference type="GO" id="GO:0004637">
    <property type="term" value="F:phosphoribosylamine-glycine ligase activity"/>
    <property type="evidence" value="ECO:0007669"/>
    <property type="project" value="TreeGrafter"/>
</dbReference>
<dbReference type="GO" id="GO:0004641">
    <property type="term" value="F:phosphoribosylformylglycinamidine cyclo-ligase activity"/>
    <property type="evidence" value="ECO:0007669"/>
    <property type="project" value="UniProtKB-UniRule"/>
</dbReference>
<dbReference type="GO" id="GO:0006189">
    <property type="term" value="P:'de novo' IMP biosynthetic process"/>
    <property type="evidence" value="ECO:0007669"/>
    <property type="project" value="UniProtKB-UniRule"/>
</dbReference>
<dbReference type="GO" id="GO:0046084">
    <property type="term" value="P:adenine biosynthetic process"/>
    <property type="evidence" value="ECO:0007669"/>
    <property type="project" value="TreeGrafter"/>
</dbReference>
<dbReference type="CDD" id="cd02196">
    <property type="entry name" value="PurM"/>
    <property type="match status" value="1"/>
</dbReference>
<dbReference type="FunFam" id="3.30.1330.10:FF:000001">
    <property type="entry name" value="Phosphoribosylformylglycinamidine cyclo-ligase"/>
    <property type="match status" value="1"/>
</dbReference>
<dbReference type="FunFam" id="3.90.650.10:FF:000011">
    <property type="entry name" value="Phosphoribosylformylglycinamidine cyclo-ligase"/>
    <property type="match status" value="1"/>
</dbReference>
<dbReference type="Gene3D" id="3.90.650.10">
    <property type="entry name" value="PurM-like C-terminal domain"/>
    <property type="match status" value="1"/>
</dbReference>
<dbReference type="Gene3D" id="3.30.1330.10">
    <property type="entry name" value="PurM-like, N-terminal domain"/>
    <property type="match status" value="1"/>
</dbReference>
<dbReference type="HAMAP" id="MF_00741">
    <property type="entry name" value="AIRS"/>
    <property type="match status" value="1"/>
</dbReference>
<dbReference type="InterPro" id="IPR010918">
    <property type="entry name" value="PurM-like_C_dom"/>
</dbReference>
<dbReference type="InterPro" id="IPR036676">
    <property type="entry name" value="PurM-like_C_sf"/>
</dbReference>
<dbReference type="InterPro" id="IPR016188">
    <property type="entry name" value="PurM-like_N"/>
</dbReference>
<dbReference type="InterPro" id="IPR036921">
    <property type="entry name" value="PurM-like_N_sf"/>
</dbReference>
<dbReference type="InterPro" id="IPR004733">
    <property type="entry name" value="PurM_cligase"/>
</dbReference>
<dbReference type="NCBIfam" id="TIGR00878">
    <property type="entry name" value="purM"/>
    <property type="match status" value="1"/>
</dbReference>
<dbReference type="PANTHER" id="PTHR10520:SF12">
    <property type="entry name" value="TRIFUNCTIONAL PURINE BIOSYNTHETIC PROTEIN ADENOSINE-3"/>
    <property type="match status" value="1"/>
</dbReference>
<dbReference type="PANTHER" id="PTHR10520">
    <property type="entry name" value="TRIFUNCTIONAL PURINE BIOSYNTHETIC PROTEIN ADENOSINE-3-RELATED"/>
    <property type="match status" value="1"/>
</dbReference>
<dbReference type="Pfam" id="PF00586">
    <property type="entry name" value="AIRS"/>
    <property type="match status" value="1"/>
</dbReference>
<dbReference type="Pfam" id="PF02769">
    <property type="entry name" value="AIRS_C"/>
    <property type="match status" value="1"/>
</dbReference>
<dbReference type="SUPFAM" id="SSF56042">
    <property type="entry name" value="PurM C-terminal domain-like"/>
    <property type="match status" value="1"/>
</dbReference>
<dbReference type="SUPFAM" id="SSF55326">
    <property type="entry name" value="PurM N-terminal domain-like"/>
    <property type="match status" value="1"/>
</dbReference>
<reference key="1">
    <citation type="journal article" date="2006" name="Proc. Natl. Acad. Sci. U.S.A.">
        <title>Molecular genetic anatomy of inter- and intraserotype variation in the human bacterial pathogen group A Streptococcus.</title>
        <authorList>
            <person name="Beres S.B."/>
            <person name="Richter E.W."/>
            <person name="Nagiec M.J."/>
            <person name="Sumby P."/>
            <person name="Porcella S.F."/>
            <person name="DeLeo F.R."/>
            <person name="Musser J.M."/>
        </authorList>
    </citation>
    <scope>NUCLEOTIDE SEQUENCE [LARGE SCALE GENOMIC DNA]</scope>
    <source>
        <strain>MGAS10750</strain>
    </source>
</reference>
<accession>Q1J936</accession>
<comment type="catalytic activity">
    <reaction evidence="1">
        <text>2-formamido-N(1)-(5-O-phospho-beta-D-ribosyl)acetamidine + ATP = 5-amino-1-(5-phospho-beta-D-ribosyl)imidazole + ADP + phosphate + H(+)</text>
        <dbReference type="Rhea" id="RHEA:23032"/>
        <dbReference type="ChEBI" id="CHEBI:15378"/>
        <dbReference type="ChEBI" id="CHEBI:30616"/>
        <dbReference type="ChEBI" id="CHEBI:43474"/>
        <dbReference type="ChEBI" id="CHEBI:137981"/>
        <dbReference type="ChEBI" id="CHEBI:147287"/>
        <dbReference type="ChEBI" id="CHEBI:456216"/>
        <dbReference type="EC" id="6.3.3.1"/>
    </reaction>
</comment>
<comment type="pathway">
    <text evidence="1">Purine metabolism; IMP biosynthesis via de novo pathway; 5-amino-1-(5-phospho-D-ribosyl)imidazole from N(2)-formyl-N(1)-(5-phospho-D-ribosyl)glycinamide: step 2/2.</text>
</comment>
<comment type="subcellular location">
    <subcellularLocation>
        <location evidence="1">Cytoplasm</location>
    </subcellularLocation>
</comment>
<comment type="similarity">
    <text evidence="1">Belongs to the AIR synthase family.</text>
</comment>
<gene>
    <name evidence="1" type="primary">purM</name>
    <name type="ordered locus">MGAS10750_Spy0025</name>
</gene>
<feature type="chain" id="PRO_0000258417" description="Phosphoribosylformylglycinamidine cyclo-ligase">
    <location>
        <begin position="1"/>
        <end position="340"/>
    </location>
</feature>
<evidence type="ECO:0000255" key="1">
    <source>
        <dbReference type="HAMAP-Rule" id="MF_00741"/>
    </source>
</evidence>
<keyword id="KW-0067">ATP-binding</keyword>
<keyword id="KW-0963">Cytoplasm</keyword>
<keyword id="KW-0436">Ligase</keyword>
<keyword id="KW-0547">Nucleotide-binding</keyword>
<keyword id="KW-0658">Purine biosynthesis</keyword>